<proteinExistence type="evidence at protein level"/>
<protein>
    <recommendedName>
        <fullName>Venom dipeptidyl peptidase 4</fullName>
        <ecNumber evidence="4">3.4.14.5</ecNumber>
    </recommendedName>
    <alternativeName>
        <fullName>Venom dipeptidyl peptidase IV</fullName>
    </alternativeName>
    <allergenName>Ves v 3</allergenName>
</protein>
<accession>B1A4F7</accession>
<sequence length="776" mass="88924">MVPLRSFVLLNSLFLVLLAARTVVTRVIDKDNSDRIVKTQNDQNLSKVPFNLEETYTADFLAYVFNGTWTSDTTIVYTDRRTGDILQFDVIKQRSTLIVDSSVMDAYIVSNYVLSPKGRYLLIGYDLKKGYRYSTFMRYVIYDIEHRAYHKIGNDMHIALAKWAPLTDDLIYILDNDIYYMRFSNNGFNDVQRVTYDGISGIVYNGVPDWVYEEEVLQDSSAIWFSPDGNHLAYASFDDRNVQEILYLHYGEPGNLDDQYPTEVKIKYPKVGTLNPVVSLTLVDLHDPTLNKIDLKAPHYAVGTDNLLYNVQWKDFDHVVVTWSNRVQNKTEIVWYNMYGEIVKTLHVVEHKGWLDIKHLFFYKGSVYIRKLQPSGTKAGRFHHVTRYDETFKQSPTQMDLTPDAIEVQNICTIDQSNGRIYYLASGLGKPSQKNLYSVPADGSEKPTCISCNVLTPEGNVCTYADAIFSPLGQYYVLVCHGPDPAFVSIFNNAHQKVYSWENNLSLRKKLAKRHLPLVKDLDVRANGYESKVRLFLPHNFDESKSYPMLVNVYAGPNTLKIIDAASYGHQVYMTTNRSVIYAYIDGRGSSNKGSKMLFSIYRKLGTVEVEDQITVTRQLQEMFPWIDSKRTGVWGWSYGGFSTAMILAKDTSFVFKCGIAIAPVSSWIYYDSIYTERFMGFPTPEDNLSGYNETDVSRRVEDIRGKKFMLIHGSGDDNVHYQQSLALAKALEKADVMFEQITYTDEAHALFGVLPHLYHTMDRFWSDCFSLSHAH</sequence>
<keyword id="KW-0020">Allergen</keyword>
<keyword id="KW-0031">Aminopeptidase</keyword>
<keyword id="KW-0903">Direct protein sequencing</keyword>
<keyword id="KW-1015">Disulfide bond</keyword>
<keyword id="KW-0325">Glycoprotein</keyword>
<keyword id="KW-0378">Hydrolase</keyword>
<keyword id="KW-0645">Protease</keyword>
<keyword id="KW-0964">Secreted</keyword>
<keyword id="KW-0732">Signal</keyword>
<reference key="1">
    <citation type="journal article" date="2010" name="J. Immunol.">
        <title>Identification, recombinant expression, and characterization of the 100 kDa high molecular weight hymenoptera venom allergens Api m 5 and Ves v 3.</title>
        <authorList>
            <person name="Blank S."/>
            <person name="Seismann H."/>
            <person name="Bockisch B."/>
            <person name="Braren I."/>
            <person name="Cifuentes L."/>
            <person name="McIntyre M."/>
            <person name="Ruhl D."/>
            <person name="Ring J."/>
            <person name="Bredehorst R."/>
            <person name="Ollert M.W."/>
            <person name="Grunwald T."/>
            <person name="Spillner E."/>
        </authorList>
    </citation>
    <scope>NUCLEOTIDE SEQUENCE [MRNA]</scope>
    <scope>PROTEIN SEQUENCE OF 83-86; 301-309; 536-539; 548-555 AND 606-613</scope>
    <scope>IDENTIFICATION BY MASS SPECTROMETRY</scope>
    <scope>FUNCTION</scope>
    <scope>CATALYTIC ACTIVITY</scope>
    <scope>ACTIVITY REGULATION</scope>
    <scope>SUBCELLULAR LOCATION</scope>
    <scope>TISSUE SPECIFICITY</scope>
    <scope>ALLERGEN</scope>
    <source>
        <tissue>Venom</tissue>
        <tissue>Venom duct</tissue>
    </source>
</reference>
<evidence type="ECO:0000250" key="1">
    <source>
        <dbReference type="UniProtKB" id="P27487"/>
    </source>
</evidence>
<evidence type="ECO:0000255" key="2"/>
<evidence type="ECO:0000255" key="3">
    <source>
        <dbReference type="PROSITE-ProRule" id="PRU10084"/>
    </source>
</evidence>
<evidence type="ECO:0000269" key="4">
    <source>
    </source>
</evidence>
<evidence type="ECO:0000305" key="5"/>
<comment type="function">
    <text evidence="4">Venom dipeptidyl-peptidase which removes N-terminal dipeptides sequentially from polypeptides having unsubstituted N-termini provided that the penultimate residue is proline. May process venom proteins into their active forms and/or modulate the chemotactic activity of immune cells after the insect sting.</text>
</comment>
<comment type="catalytic activity">
    <reaction evidence="4">
        <text>Release of an N-terminal dipeptide, Xaa-Yaa-|-Zaa-, from a polypeptide, preferentially when Yaa is Pro, provided Zaa is neither Pro nor hydroxyproline.</text>
        <dbReference type="EC" id="3.4.14.5"/>
    </reaction>
</comment>
<comment type="activity regulation">
    <text evidence="4">Inhibited by diprotin A.</text>
</comment>
<comment type="subcellular location">
    <subcellularLocation>
        <location evidence="4">Secreted</location>
    </subcellularLocation>
</comment>
<comment type="tissue specificity">
    <text evidence="4">Expressed by the venom gland.</text>
</comment>
<comment type="allergen">
    <text evidence="4">Causes an allergic reaction in human.</text>
</comment>
<comment type="similarity">
    <text evidence="5">Belongs to the peptidase S9B family. DPPIV subfamily.</text>
</comment>
<organism>
    <name type="scientific">Vespula vulgaris</name>
    <name type="common">Yellow jacket</name>
    <name type="synonym">Wasp</name>
    <dbReference type="NCBI Taxonomy" id="7454"/>
    <lineage>
        <taxon>Eukaryota</taxon>
        <taxon>Metazoa</taxon>
        <taxon>Ecdysozoa</taxon>
        <taxon>Arthropoda</taxon>
        <taxon>Hexapoda</taxon>
        <taxon>Insecta</taxon>
        <taxon>Pterygota</taxon>
        <taxon>Neoptera</taxon>
        <taxon>Endopterygota</taxon>
        <taxon>Hymenoptera</taxon>
        <taxon>Apocrita</taxon>
        <taxon>Aculeata</taxon>
        <taxon>Vespoidea</taxon>
        <taxon>Vespidae</taxon>
        <taxon>Vespinae</taxon>
        <taxon>Vespula</taxon>
    </lineage>
</organism>
<dbReference type="EC" id="3.4.14.5" evidence="4"/>
<dbReference type="EMBL" id="EU420987">
    <property type="protein sequence ID" value="ACA00159.1"/>
    <property type="molecule type" value="mRNA"/>
</dbReference>
<dbReference type="SMR" id="B1A4F7"/>
<dbReference type="Allergome" id="5767">
    <property type="allergen name" value="Ves v 3"/>
</dbReference>
<dbReference type="Allergome" id="5768">
    <property type="allergen name" value="Ves v 3.0101"/>
</dbReference>
<dbReference type="ESTHER" id="vesvu-vddp4">
    <property type="family name" value="DPP4N_Peptidase_S9"/>
</dbReference>
<dbReference type="GO" id="GO:0005576">
    <property type="term" value="C:extracellular region"/>
    <property type="evidence" value="ECO:0007669"/>
    <property type="project" value="UniProtKB-SubCell"/>
</dbReference>
<dbReference type="GO" id="GO:0005886">
    <property type="term" value="C:plasma membrane"/>
    <property type="evidence" value="ECO:0007669"/>
    <property type="project" value="TreeGrafter"/>
</dbReference>
<dbReference type="GO" id="GO:0004177">
    <property type="term" value="F:aminopeptidase activity"/>
    <property type="evidence" value="ECO:0007669"/>
    <property type="project" value="UniProtKB-KW"/>
</dbReference>
<dbReference type="GO" id="GO:0008239">
    <property type="term" value="F:dipeptidyl-peptidase activity"/>
    <property type="evidence" value="ECO:0007669"/>
    <property type="project" value="UniProtKB-EC"/>
</dbReference>
<dbReference type="GO" id="GO:0008236">
    <property type="term" value="F:serine-type peptidase activity"/>
    <property type="evidence" value="ECO:0007669"/>
    <property type="project" value="InterPro"/>
</dbReference>
<dbReference type="GO" id="GO:0006508">
    <property type="term" value="P:proteolysis"/>
    <property type="evidence" value="ECO:0007669"/>
    <property type="project" value="UniProtKB-KW"/>
</dbReference>
<dbReference type="FunFam" id="3.40.50.1820:FF:000003">
    <property type="entry name" value="Dipeptidyl peptidase 4"/>
    <property type="match status" value="1"/>
</dbReference>
<dbReference type="Gene3D" id="3.40.50.1820">
    <property type="entry name" value="alpha/beta hydrolase"/>
    <property type="match status" value="1"/>
</dbReference>
<dbReference type="Gene3D" id="2.140.10.30">
    <property type="entry name" value="Dipeptidylpeptidase IV, N-terminal domain"/>
    <property type="match status" value="1"/>
</dbReference>
<dbReference type="InterPro" id="IPR029058">
    <property type="entry name" value="AB_hydrolase_fold"/>
</dbReference>
<dbReference type="InterPro" id="IPR001375">
    <property type="entry name" value="Peptidase_S9_cat"/>
</dbReference>
<dbReference type="InterPro" id="IPR002469">
    <property type="entry name" value="Peptidase_S9B_N"/>
</dbReference>
<dbReference type="InterPro" id="IPR050278">
    <property type="entry name" value="Serine_Prot_S9B/DPPIV"/>
</dbReference>
<dbReference type="PANTHER" id="PTHR11731">
    <property type="entry name" value="PROTEASE FAMILY S9B,C DIPEPTIDYL-PEPTIDASE IV-RELATED"/>
    <property type="match status" value="1"/>
</dbReference>
<dbReference type="PANTHER" id="PTHR11731:SF154">
    <property type="entry name" value="VENOM DIPEPTIDYL PEPTIDASE 4-LIKE PROTEIN"/>
    <property type="match status" value="1"/>
</dbReference>
<dbReference type="Pfam" id="PF00930">
    <property type="entry name" value="DPPIV_N"/>
    <property type="match status" value="1"/>
</dbReference>
<dbReference type="Pfam" id="PF00326">
    <property type="entry name" value="Peptidase_S9"/>
    <property type="match status" value="1"/>
</dbReference>
<dbReference type="SUPFAM" id="SSF53474">
    <property type="entry name" value="alpha/beta-Hydrolases"/>
    <property type="match status" value="1"/>
</dbReference>
<dbReference type="SUPFAM" id="SSF82171">
    <property type="entry name" value="DPP6 N-terminal domain-like"/>
    <property type="match status" value="1"/>
</dbReference>
<name>VDDP4_VESVU</name>
<feature type="signal peptide" evidence="2">
    <location>
        <begin position="1"/>
        <end position="25"/>
    </location>
</feature>
<feature type="chain" id="PRO_0000401924" description="Venom dipeptidyl peptidase 4">
    <location>
        <begin position="26"/>
        <end position="776"/>
    </location>
</feature>
<feature type="active site" description="Charge relay system" evidence="3">
    <location>
        <position position="638"/>
    </location>
</feature>
<feature type="active site" description="Charge relay system" evidence="3">
    <location>
        <position position="717"/>
    </location>
</feature>
<feature type="active site" description="Charge relay system" evidence="3">
    <location>
        <position position="749"/>
    </location>
</feature>
<feature type="glycosylation site" description="N-linked (GlcNAc...) asparagine" evidence="2">
    <location>
        <position position="44"/>
    </location>
</feature>
<feature type="glycosylation site" description="N-linked (GlcNAc...) asparagine" evidence="2">
    <location>
        <position position="66"/>
    </location>
</feature>
<feature type="glycosylation site" description="N-linked (GlcNAc...) asparagine" evidence="2">
    <location>
        <position position="329"/>
    </location>
</feature>
<feature type="glycosylation site" description="N-linked (GlcNAc...) asparagine" evidence="2">
    <location>
        <position position="504"/>
    </location>
</feature>
<feature type="glycosylation site" description="N-linked (GlcNAc...) asparagine" evidence="2">
    <location>
        <position position="577"/>
    </location>
</feature>
<feature type="glycosylation site" description="N-linked (GlcNAc...) asparagine" evidence="2">
    <location>
        <position position="688"/>
    </location>
</feature>
<feature type="glycosylation site" description="N-linked (GlcNAc...) asparagine" evidence="2">
    <location>
        <position position="693"/>
    </location>
</feature>
<feature type="disulfide bond" evidence="1">
    <location>
        <begin position="449"/>
        <end position="452"/>
    </location>
</feature>
<feature type="disulfide bond" evidence="1">
    <location>
        <begin position="462"/>
        <end position="480"/>
    </location>
</feature>
<feature type="disulfide bond" evidence="1">
    <location>
        <begin position="658"/>
        <end position="769"/>
    </location>
</feature>